<protein>
    <recommendedName>
        <fullName evidence="1">Small ribosomal subunit protein uS5</fullName>
    </recommendedName>
    <alternativeName>
        <fullName evidence="4">30S ribosomal protein S5</fullName>
    </alternativeName>
    <alternativeName>
        <fullName>RRP-S5</fullName>
    </alternativeName>
</protein>
<accession>Q6N4V0</accession>
<organism>
    <name type="scientific">Rhodopseudomonas palustris (strain ATCC BAA-98 / CGA009)</name>
    <dbReference type="NCBI Taxonomy" id="258594"/>
    <lineage>
        <taxon>Bacteria</taxon>
        <taxon>Pseudomonadati</taxon>
        <taxon>Pseudomonadota</taxon>
        <taxon>Alphaproteobacteria</taxon>
        <taxon>Hyphomicrobiales</taxon>
        <taxon>Nitrobacteraceae</taxon>
        <taxon>Rhodopseudomonas</taxon>
    </lineage>
</organism>
<feature type="initiator methionine" description="Removed">
    <location>
        <position position="1"/>
    </location>
</feature>
<feature type="chain" id="PRO_0000131581" description="Small ribosomal subunit protein uS5">
    <location>
        <begin position="2"/>
        <end position="191"/>
    </location>
</feature>
<feature type="domain" description="S5 DRBM" evidence="1">
    <location>
        <begin position="23"/>
        <end position="86"/>
    </location>
</feature>
<feature type="region of interest" description="Disordered" evidence="2">
    <location>
        <begin position="1"/>
        <end position="21"/>
    </location>
</feature>
<comment type="function">
    <text evidence="1">With S4 and S12 plays an important role in translational accuracy.</text>
</comment>
<comment type="function">
    <text evidence="1">Located at the back of the 30S subunit body where it stabilizes the conformation of the head with respect to the body.</text>
</comment>
<comment type="subunit">
    <text evidence="1">Part of the 30S ribosomal subunit. Contacts proteins S4 and S8.</text>
</comment>
<comment type="domain">
    <text>The N-terminal domain interacts with the head of the 30S subunit; the C-terminal domain interacts with the body and contacts protein S4. The interaction surface between S4 and S5 is involved in control of translational fidelity.</text>
</comment>
<comment type="mass spectrometry" mass="20522.4" method="Electrospray" evidence="3"/>
<comment type="similarity">
    <text evidence="1">Belongs to the universal ribosomal protein uS5 family.</text>
</comment>
<reference key="1">
    <citation type="journal article" date="2004" name="Nat. Biotechnol.">
        <title>Complete genome sequence of the metabolically versatile photosynthetic bacterium Rhodopseudomonas palustris.</title>
        <authorList>
            <person name="Larimer F.W."/>
            <person name="Chain P."/>
            <person name="Hauser L."/>
            <person name="Lamerdin J.E."/>
            <person name="Malfatti S."/>
            <person name="Do L."/>
            <person name="Land M.L."/>
            <person name="Pelletier D.A."/>
            <person name="Beatty J.T."/>
            <person name="Lang A.S."/>
            <person name="Tabita F.R."/>
            <person name="Gibson J.L."/>
            <person name="Hanson T.E."/>
            <person name="Bobst C."/>
            <person name="Torres y Torres J.L."/>
            <person name="Peres C."/>
            <person name="Harrison F.H."/>
            <person name="Gibson J."/>
            <person name="Harwood C.S."/>
        </authorList>
    </citation>
    <scope>NUCLEOTIDE SEQUENCE [LARGE SCALE GENOMIC DNA]</scope>
    <source>
        <strain>ATCC BAA-98 / CGA009</strain>
    </source>
</reference>
<reference key="2">
    <citation type="journal article" date="2004" name="J. Proteome Res.">
        <title>Characterization of the 70S ribosome from Rhodopseudomonas palustris using an integrated 'top-down' and 'bottom-up' mass spectrometric approach.</title>
        <authorList>
            <person name="Strader M.B."/>
            <person name="VerBerkmoes N.C."/>
            <person name="Tabb D.L."/>
            <person name="Connelly H.M."/>
            <person name="Barton J.W."/>
            <person name="Bruce B.D."/>
            <person name="Pelletier D.A."/>
            <person name="Davison B.H."/>
            <person name="Hettich R.L."/>
            <person name="Larimer F.W."/>
            <person name="Hurst G.B."/>
        </authorList>
    </citation>
    <scope>MASS SPECTROMETRY</scope>
    <source>
        <strain>ATCC BAA-98 / CGA009</strain>
    </source>
</reference>
<proteinExistence type="evidence at protein level"/>
<gene>
    <name evidence="1" type="primary">rpsE</name>
    <name type="ordered locus">RPA3233</name>
</gene>
<keyword id="KW-0687">Ribonucleoprotein</keyword>
<keyword id="KW-0689">Ribosomal protein</keyword>
<keyword id="KW-0694">RNA-binding</keyword>
<keyword id="KW-0699">rRNA-binding</keyword>
<evidence type="ECO:0000255" key="1">
    <source>
        <dbReference type="HAMAP-Rule" id="MF_01307"/>
    </source>
</evidence>
<evidence type="ECO:0000256" key="2">
    <source>
        <dbReference type="SAM" id="MobiDB-lite"/>
    </source>
</evidence>
<evidence type="ECO:0000269" key="3">
    <source>
    </source>
</evidence>
<evidence type="ECO:0000305" key="4"/>
<sequence length="191" mass="20655">MAAERERGGRERSREREERDSEFVDKLVHINRVAKVVKGGKRFGFAALVVVGDQKGRVGFGHGKAREVPEAIRKATESAKRNLTRVALREGRTLHHDIAGRHGAGRVYLRAAPAGTGIIAGGPMRAVFETLGIADVVAKSVGSSNPYNMVRATFDALKHLDSPRSVAARRNIKVSTLQARRVGGDAEVVAE</sequence>
<name>RS5_RHOPA</name>
<dbReference type="EMBL" id="BX572603">
    <property type="protein sequence ID" value="CAE28674.1"/>
    <property type="molecule type" value="Genomic_DNA"/>
</dbReference>
<dbReference type="RefSeq" id="WP_011158778.1">
    <property type="nucleotide sequence ID" value="NZ_CP116810.1"/>
</dbReference>
<dbReference type="SMR" id="Q6N4V0"/>
<dbReference type="IntAct" id="Q6N4V0">
    <property type="interactions" value="1"/>
</dbReference>
<dbReference type="STRING" id="258594.RPA3233"/>
<dbReference type="GeneID" id="66894319"/>
<dbReference type="eggNOG" id="COG0098">
    <property type="taxonomic scope" value="Bacteria"/>
</dbReference>
<dbReference type="HOGENOM" id="CLU_065898_2_2_5"/>
<dbReference type="PhylomeDB" id="Q6N4V0"/>
<dbReference type="GO" id="GO:0015935">
    <property type="term" value="C:small ribosomal subunit"/>
    <property type="evidence" value="ECO:0007669"/>
    <property type="project" value="InterPro"/>
</dbReference>
<dbReference type="GO" id="GO:0019843">
    <property type="term" value="F:rRNA binding"/>
    <property type="evidence" value="ECO:0007669"/>
    <property type="project" value="UniProtKB-UniRule"/>
</dbReference>
<dbReference type="GO" id="GO:0003735">
    <property type="term" value="F:structural constituent of ribosome"/>
    <property type="evidence" value="ECO:0007669"/>
    <property type="project" value="InterPro"/>
</dbReference>
<dbReference type="GO" id="GO:0006412">
    <property type="term" value="P:translation"/>
    <property type="evidence" value="ECO:0007669"/>
    <property type="project" value="UniProtKB-UniRule"/>
</dbReference>
<dbReference type="FunFam" id="3.30.160.20:FF:000001">
    <property type="entry name" value="30S ribosomal protein S5"/>
    <property type="match status" value="1"/>
</dbReference>
<dbReference type="FunFam" id="3.30.230.10:FF:000002">
    <property type="entry name" value="30S ribosomal protein S5"/>
    <property type="match status" value="1"/>
</dbReference>
<dbReference type="Gene3D" id="3.30.160.20">
    <property type="match status" value="1"/>
</dbReference>
<dbReference type="Gene3D" id="3.30.230.10">
    <property type="match status" value="1"/>
</dbReference>
<dbReference type="HAMAP" id="MF_01307_B">
    <property type="entry name" value="Ribosomal_uS5_B"/>
    <property type="match status" value="1"/>
</dbReference>
<dbReference type="InterPro" id="IPR020568">
    <property type="entry name" value="Ribosomal_Su5_D2-typ_SF"/>
</dbReference>
<dbReference type="InterPro" id="IPR000851">
    <property type="entry name" value="Ribosomal_uS5"/>
</dbReference>
<dbReference type="InterPro" id="IPR005712">
    <property type="entry name" value="Ribosomal_uS5_bac-type"/>
</dbReference>
<dbReference type="InterPro" id="IPR005324">
    <property type="entry name" value="Ribosomal_uS5_C"/>
</dbReference>
<dbReference type="InterPro" id="IPR013810">
    <property type="entry name" value="Ribosomal_uS5_N"/>
</dbReference>
<dbReference type="InterPro" id="IPR018192">
    <property type="entry name" value="Ribosomal_uS5_N_CS"/>
</dbReference>
<dbReference type="InterPro" id="IPR014721">
    <property type="entry name" value="Ribsml_uS5_D2-typ_fold_subgr"/>
</dbReference>
<dbReference type="NCBIfam" id="TIGR01021">
    <property type="entry name" value="rpsE_bact"/>
    <property type="match status" value="1"/>
</dbReference>
<dbReference type="PANTHER" id="PTHR48277">
    <property type="entry name" value="MITOCHONDRIAL RIBOSOMAL PROTEIN S5"/>
    <property type="match status" value="1"/>
</dbReference>
<dbReference type="PANTHER" id="PTHR48277:SF1">
    <property type="entry name" value="MITOCHONDRIAL RIBOSOMAL PROTEIN S5"/>
    <property type="match status" value="1"/>
</dbReference>
<dbReference type="Pfam" id="PF00333">
    <property type="entry name" value="Ribosomal_S5"/>
    <property type="match status" value="1"/>
</dbReference>
<dbReference type="Pfam" id="PF03719">
    <property type="entry name" value="Ribosomal_S5_C"/>
    <property type="match status" value="1"/>
</dbReference>
<dbReference type="SUPFAM" id="SSF54768">
    <property type="entry name" value="dsRNA-binding domain-like"/>
    <property type="match status" value="1"/>
</dbReference>
<dbReference type="SUPFAM" id="SSF54211">
    <property type="entry name" value="Ribosomal protein S5 domain 2-like"/>
    <property type="match status" value="1"/>
</dbReference>
<dbReference type="PROSITE" id="PS00585">
    <property type="entry name" value="RIBOSOMAL_S5"/>
    <property type="match status" value="1"/>
</dbReference>
<dbReference type="PROSITE" id="PS50881">
    <property type="entry name" value="S5_DSRBD"/>
    <property type="match status" value="1"/>
</dbReference>